<keyword id="KW-0067">ATP-binding</keyword>
<keyword id="KW-0966">Cell projection</keyword>
<keyword id="KW-0963">Cytoplasm</keyword>
<keyword id="KW-0206">Cytoskeleton</keyword>
<keyword id="KW-0418">Kinase</keyword>
<keyword id="KW-0547">Nucleotide-binding</keyword>
<keyword id="KW-0597">Phosphoprotein</keyword>
<keyword id="KW-1185">Reference proteome</keyword>
<keyword id="KW-0677">Repeat</keyword>
<keyword id="KW-0723">Serine/threonine-protein kinase</keyword>
<keyword id="KW-0808">Transferase</keyword>
<keyword id="KW-0043">Tumor suppressor</keyword>
<organism>
    <name type="scientific">Pongo abelii</name>
    <name type="common">Sumatran orangutan</name>
    <name type="synonym">Pongo pygmaeus abelii</name>
    <dbReference type="NCBI Taxonomy" id="9601"/>
    <lineage>
        <taxon>Eukaryota</taxon>
        <taxon>Metazoa</taxon>
        <taxon>Chordata</taxon>
        <taxon>Craniata</taxon>
        <taxon>Vertebrata</taxon>
        <taxon>Euteleostomi</taxon>
        <taxon>Mammalia</taxon>
        <taxon>Eutheria</taxon>
        <taxon>Euarchontoglires</taxon>
        <taxon>Primates</taxon>
        <taxon>Haplorrhini</taxon>
        <taxon>Catarrhini</taxon>
        <taxon>Hominidae</taxon>
        <taxon>Pongo</taxon>
    </lineage>
</organism>
<dbReference type="EC" id="2.7.11.21"/>
<dbReference type="EMBL" id="CR861235">
    <property type="protein sequence ID" value="CAH93305.1"/>
    <property type="molecule type" value="Transcribed_RNA"/>
</dbReference>
<dbReference type="SMR" id="Q5R4L1"/>
<dbReference type="FunCoup" id="Q5R4L1">
    <property type="interactions" value="396"/>
</dbReference>
<dbReference type="STRING" id="9601.ENSPPYP00000017300"/>
<dbReference type="Ensembl" id="ENSPPYT00000018004.3">
    <property type="protein sequence ID" value="ENSPPYP00000017300.2"/>
    <property type="gene ID" value="ENSPPYG00000015483.3"/>
</dbReference>
<dbReference type="eggNOG" id="KOG0575">
    <property type="taxonomic scope" value="Eukaryota"/>
</dbReference>
<dbReference type="GeneTree" id="ENSGT00940000158739"/>
<dbReference type="HOGENOM" id="CLU_000288_46_1_1"/>
<dbReference type="InParanoid" id="Q5R4L1"/>
<dbReference type="OMA" id="NMPESDH"/>
<dbReference type="TreeFam" id="TF101089"/>
<dbReference type="Proteomes" id="UP000001595">
    <property type="component" value="Chromosome 5"/>
</dbReference>
<dbReference type="GO" id="GO:0005814">
    <property type="term" value="C:centriole"/>
    <property type="evidence" value="ECO:0000250"/>
    <property type="project" value="UniProtKB"/>
</dbReference>
<dbReference type="GO" id="GO:0005813">
    <property type="term" value="C:centrosome"/>
    <property type="evidence" value="ECO:0000250"/>
    <property type="project" value="UniProtKB"/>
</dbReference>
<dbReference type="GO" id="GO:0000785">
    <property type="term" value="C:chromatin"/>
    <property type="evidence" value="ECO:0007669"/>
    <property type="project" value="Ensembl"/>
</dbReference>
<dbReference type="GO" id="GO:0005737">
    <property type="term" value="C:cytoplasm"/>
    <property type="evidence" value="ECO:0007669"/>
    <property type="project" value="UniProtKB-KW"/>
</dbReference>
<dbReference type="GO" id="GO:0030425">
    <property type="term" value="C:dendrite"/>
    <property type="evidence" value="ECO:0000250"/>
    <property type="project" value="UniProtKB"/>
</dbReference>
<dbReference type="GO" id="GO:0000776">
    <property type="term" value="C:kinetochore"/>
    <property type="evidence" value="ECO:0007669"/>
    <property type="project" value="TreeGrafter"/>
</dbReference>
<dbReference type="GO" id="GO:0005634">
    <property type="term" value="C:nucleus"/>
    <property type="evidence" value="ECO:0007669"/>
    <property type="project" value="TreeGrafter"/>
</dbReference>
<dbReference type="GO" id="GO:0000922">
    <property type="term" value="C:spindle pole"/>
    <property type="evidence" value="ECO:0007669"/>
    <property type="project" value="TreeGrafter"/>
</dbReference>
<dbReference type="GO" id="GO:0005524">
    <property type="term" value="F:ATP binding"/>
    <property type="evidence" value="ECO:0007669"/>
    <property type="project" value="UniProtKB-KW"/>
</dbReference>
<dbReference type="GO" id="GO:0043008">
    <property type="term" value="F:ATP-dependent protein binding"/>
    <property type="evidence" value="ECO:0007669"/>
    <property type="project" value="Ensembl"/>
</dbReference>
<dbReference type="GO" id="GO:0106310">
    <property type="term" value="F:protein serine kinase activity"/>
    <property type="evidence" value="ECO:0007669"/>
    <property type="project" value="RHEA"/>
</dbReference>
<dbReference type="GO" id="GO:0004674">
    <property type="term" value="F:protein serine/threonine kinase activity"/>
    <property type="evidence" value="ECO:0007669"/>
    <property type="project" value="UniProtKB-KW"/>
</dbReference>
<dbReference type="GO" id="GO:0000082">
    <property type="term" value="P:G1/S transition of mitotic cell cycle"/>
    <property type="evidence" value="ECO:0000250"/>
    <property type="project" value="UniProtKB"/>
</dbReference>
<dbReference type="GO" id="GO:0060292">
    <property type="term" value="P:long-term synaptic depression"/>
    <property type="evidence" value="ECO:0000250"/>
    <property type="project" value="UniProtKB"/>
</dbReference>
<dbReference type="GO" id="GO:0060291">
    <property type="term" value="P:long-term synaptic potentiation"/>
    <property type="evidence" value="ECO:0000250"/>
    <property type="project" value="UniProtKB"/>
</dbReference>
<dbReference type="GO" id="GO:0007613">
    <property type="term" value="P:memory"/>
    <property type="evidence" value="ECO:0000250"/>
    <property type="project" value="UniProtKB"/>
</dbReference>
<dbReference type="GO" id="GO:0007052">
    <property type="term" value="P:mitotic spindle organization"/>
    <property type="evidence" value="ECO:0000250"/>
    <property type="project" value="UniProtKB"/>
</dbReference>
<dbReference type="GO" id="GO:0016525">
    <property type="term" value="P:negative regulation of angiogenesis"/>
    <property type="evidence" value="ECO:0007669"/>
    <property type="project" value="Ensembl"/>
</dbReference>
<dbReference type="GO" id="GO:0043066">
    <property type="term" value="P:negative regulation of apoptotic process"/>
    <property type="evidence" value="ECO:0000250"/>
    <property type="project" value="UniProtKB"/>
</dbReference>
<dbReference type="GO" id="GO:0071866">
    <property type="term" value="P:negative regulation of apoptotic process in bone marrow cell"/>
    <property type="evidence" value="ECO:0007669"/>
    <property type="project" value="Ensembl"/>
</dbReference>
<dbReference type="GO" id="GO:2000773">
    <property type="term" value="P:negative regulation of cellular senescence"/>
    <property type="evidence" value="ECO:0007669"/>
    <property type="project" value="Ensembl"/>
</dbReference>
<dbReference type="GO" id="GO:0010508">
    <property type="term" value="P:positive regulation of autophagy"/>
    <property type="evidence" value="ECO:0007669"/>
    <property type="project" value="Ensembl"/>
</dbReference>
<dbReference type="GO" id="GO:0090050">
    <property type="term" value="P:positive regulation of cell migration involved in sprouting angiogenesis"/>
    <property type="evidence" value="ECO:0007669"/>
    <property type="project" value="Ensembl"/>
</dbReference>
<dbReference type="GO" id="GO:0045732">
    <property type="term" value="P:positive regulation of protein catabolic process"/>
    <property type="evidence" value="ECO:0007669"/>
    <property type="project" value="Ensembl"/>
</dbReference>
<dbReference type="GO" id="GO:0032486">
    <property type="term" value="P:Rap protein signal transduction"/>
    <property type="evidence" value="ECO:0000250"/>
    <property type="project" value="UniProtKB"/>
</dbReference>
<dbReference type="GO" id="GO:0007265">
    <property type="term" value="P:Ras protein signal transduction"/>
    <property type="evidence" value="ECO:0000250"/>
    <property type="project" value="UniProtKB"/>
</dbReference>
<dbReference type="GO" id="GO:0046599">
    <property type="term" value="P:regulation of centriole replication"/>
    <property type="evidence" value="ECO:0000250"/>
    <property type="project" value="UniProtKB"/>
</dbReference>
<dbReference type="GO" id="GO:0048167">
    <property type="term" value="P:regulation of synaptic plasticity"/>
    <property type="evidence" value="ECO:0000250"/>
    <property type="project" value="UniProtKB"/>
</dbReference>
<dbReference type="CDD" id="cd13118">
    <property type="entry name" value="POLO_box_1"/>
    <property type="match status" value="1"/>
</dbReference>
<dbReference type="CDD" id="cd13117">
    <property type="entry name" value="POLO_box_2"/>
    <property type="match status" value="1"/>
</dbReference>
<dbReference type="CDD" id="cd14188">
    <property type="entry name" value="STKc_PLK2"/>
    <property type="match status" value="1"/>
</dbReference>
<dbReference type="FunFam" id="1.10.510.10:FF:001498">
    <property type="entry name" value="Serine/threonine-protein kinase PLK"/>
    <property type="match status" value="1"/>
</dbReference>
<dbReference type="FunFam" id="3.30.1120.30:FF:000001">
    <property type="entry name" value="Serine/threonine-protein kinase PLK"/>
    <property type="match status" value="1"/>
</dbReference>
<dbReference type="FunFam" id="3.30.200.20:FF:000091">
    <property type="entry name" value="Serine/threonine-protein kinase PLK"/>
    <property type="match status" value="1"/>
</dbReference>
<dbReference type="Gene3D" id="3.30.200.20">
    <property type="entry name" value="Phosphorylase Kinase, domain 1"/>
    <property type="match status" value="1"/>
</dbReference>
<dbReference type="Gene3D" id="3.30.1120.30">
    <property type="entry name" value="POLO box domain"/>
    <property type="match status" value="2"/>
</dbReference>
<dbReference type="Gene3D" id="1.10.510.10">
    <property type="entry name" value="Transferase(Phosphotransferase) domain 1"/>
    <property type="match status" value="1"/>
</dbReference>
<dbReference type="InterPro" id="IPR011009">
    <property type="entry name" value="Kinase-like_dom_sf"/>
</dbReference>
<dbReference type="InterPro" id="IPR042825">
    <property type="entry name" value="PLK2_STKc"/>
</dbReference>
<dbReference type="InterPro" id="IPR033701">
    <property type="entry name" value="POLO_box_1"/>
</dbReference>
<dbReference type="InterPro" id="IPR033695">
    <property type="entry name" value="POLO_box_2"/>
</dbReference>
<dbReference type="InterPro" id="IPR000959">
    <property type="entry name" value="POLO_box_dom"/>
</dbReference>
<dbReference type="InterPro" id="IPR036947">
    <property type="entry name" value="POLO_box_dom_sf"/>
</dbReference>
<dbReference type="InterPro" id="IPR000719">
    <property type="entry name" value="Prot_kinase_dom"/>
</dbReference>
<dbReference type="InterPro" id="IPR017441">
    <property type="entry name" value="Protein_kinase_ATP_BS"/>
</dbReference>
<dbReference type="InterPro" id="IPR008271">
    <property type="entry name" value="Ser/Thr_kinase_AS"/>
</dbReference>
<dbReference type="PANTHER" id="PTHR24345">
    <property type="entry name" value="SERINE/THREONINE-PROTEIN KINASE PLK"/>
    <property type="match status" value="1"/>
</dbReference>
<dbReference type="PANTHER" id="PTHR24345:SF44">
    <property type="entry name" value="SERINE_THREONINE-PROTEIN KINASE PLK2"/>
    <property type="match status" value="1"/>
</dbReference>
<dbReference type="Pfam" id="PF00069">
    <property type="entry name" value="Pkinase"/>
    <property type="match status" value="1"/>
</dbReference>
<dbReference type="Pfam" id="PF00659">
    <property type="entry name" value="POLO_box"/>
    <property type="match status" value="2"/>
</dbReference>
<dbReference type="SMART" id="SM00220">
    <property type="entry name" value="S_TKc"/>
    <property type="match status" value="1"/>
</dbReference>
<dbReference type="SUPFAM" id="SSF82615">
    <property type="entry name" value="Polo-box domain"/>
    <property type="match status" value="2"/>
</dbReference>
<dbReference type="SUPFAM" id="SSF56112">
    <property type="entry name" value="Protein kinase-like (PK-like)"/>
    <property type="match status" value="1"/>
</dbReference>
<dbReference type="PROSITE" id="PS50078">
    <property type="entry name" value="POLO_BOX"/>
    <property type="match status" value="2"/>
</dbReference>
<dbReference type="PROSITE" id="PS00107">
    <property type="entry name" value="PROTEIN_KINASE_ATP"/>
    <property type="match status" value="1"/>
</dbReference>
<dbReference type="PROSITE" id="PS50011">
    <property type="entry name" value="PROTEIN_KINASE_DOM"/>
    <property type="match status" value="1"/>
</dbReference>
<dbReference type="PROSITE" id="PS00108">
    <property type="entry name" value="PROTEIN_KINASE_ST"/>
    <property type="match status" value="1"/>
</dbReference>
<feature type="chain" id="PRO_0000260301" description="Serine/threonine-protein kinase PLK2">
    <location>
        <begin position="1"/>
        <end position="685"/>
    </location>
</feature>
<feature type="domain" description="Protein kinase" evidence="4">
    <location>
        <begin position="82"/>
        <end position="334"/>
    </location>
</feature>
<feature type="domain" description="POLO box 1" evidence="3">
    <location>
        <begin position="503"/>
        <end position="581"/>
    </location>
</feature>
<feature type="domain" description="POLO box 2" evidence="3">
    <location>
        <begin position="601"/>
        <end position="685"/>
    </location>
</feature>
<feature type="region of interest" description="Disordered" evidence="6">
    <location>
        <begin position="24"/>
        <end position="71"/>
    </location>
</feature>
<feature type="region of interest" description="Disordered" evidence="6">
    <location>
        <begin position="406"/>
        <end position="433"/>
    </location>
</feature>
<feature type="compositionally biased region" description="Low complexity" evidence="6">
    <location>
        <begin position="43"/>
        <end position="55"/>
    </location>
</feature>
<feature type="active site" description="Proton acceptor" evidence="4 5">
    <location>
        <position position="205"/>
    </location>
</feature>
<feature type="binding site" evidence="4">
    <location>
        <begin position="88"/>
        <end position="96"/>
    </location>
    <ligand>
        <name>ATP</name>
        <dbReference type="ChEBI" id="CHEBI:30616"/>
    </ligand>
</feature>
<feature type="binding site" evidence="4">
    <location>
        <position position="111"/>
    </location>
    <ligand>
        <name>ATP</name>
        <dbReference type="ChEBI" id="CHEBI:30616"/>
    </ligand>
</feature>
<feature type="modified residue" description="Phosphothreonine" evidence="2">
    <location>
        <position position="239"/>
    </location>
</feature>
<name>PLK2_PONAB</name>
<gene>
    <name type="primary">PLK2</name>
</gene>
<evidence type="ECO:0000250" key="1"/>
<evidence type="ECO:0000250" key="2">
    <source>
        <dbReference type="UniProtKB" id="P53351"/>
    </source>
</evidence>
<evidence type="ECO:0000255" key="3">
    <source>
        <dbReference type="PROSITE-ProRule" id="PRU00154"/>
    </source>
</evidence>
<evidence type="ECO:0000255" key="4">
    <source>
        <dbReference type="PROSITE-ProRule" id="PRU00159"/>
    </source>
</evidence>
<evidence type="ECO:0000255" key="5">
    <source>
        <dbReference type="PROSITE-ProRule" id="PRU10027"/>
    </source>
</evidence>
<evidence type="ECO:0000256" key="6">
    <source>
        <dbReference type="SAM" id="MobiDB-lite"/>
    </source>
</evidence>
<reference key="1">
    <citation type="submission" date="2004-11" db="EMBL/GenBank/DDBJ databases">
        <authorList>
            <consortium name="The German cDNA consortium"/>
        </authorList>
    </citation>
    <scope>NUCLEOTIDE SEQUENCE [LARGE SCALE MRNA]</scope>
    <source>
        <tissue>Brain cortex</tissue>
    </source>
</reference>
<sequence>MELLRTITYQPAASTKMCEQALGKGCGADSKKKRPPQPPEESQPPQSQAQVPPAAAHHHHHHSHSGPEISRIIVDPTTGKRYCRGKVLGKGGFAKCYEMTDLTNNKVYAAKIIPHSRVAKPHQREKIDKEIELHRILHHKHVVQFYHYFEDKENIYILLEYCSRRSMAHILKARKVLTEPEVRYYLRQIVSGLKYLHEQEILHRDLKLGNFFINEAMELKVGDFGLAARLEPLEHRRRTICGTPNYLSPEVLNKQGHGCESDIWALGCVMYTMLLGRPPFETTNLKETYRCIREARYTMPSSLLAPAKHLIASMLSKNPEDRPSLDDIIRHDFFLQGFTPDRLSSSCCHTVPDFHLSSPAKNFFKKAAAALFGGKKDKARYIDTHNRVSKEDEDIYKLRHDLKKTSITQQPSKHRTDEELQPPTTTVARSGTPAVENKQQIGDAIRMIVRGTLGSCSSSSECLEDSTMGSVADTVARVLRGCLENMPEADCIPKEQLSTSFQWVTKWVDYSNKYGFGYQLSDHTVGVLFNNGAHMSLLPDKKTVHYYAELGQCSVFPATDAPEQFISQVTVLKYFSHYMEENLMDGGDLPSVTDIRRPRLYLLQWLKSDKALMMLFNDGTFQVNFYHDHTKIIICSQNEEYLLTYINEDRISTTFRLTTLLMSGCSLELKNRMEYALNMLLQRCN</sequence>
<comment type="function">
    <text evidence="1">Tumor suppressor serine/threonine-protein kinase involved in synaptic plasticity, centriole duplication and G1/S phase transition. Polo-like kinases act by binding and phosphorylating proteins that are already phosphorylated on a specific motif recognized by the POLO box domains. Phosphorylates CPAP, NPM1, RAPGEF2, RASGRF1, SNCA, SIPA1L1 and SYNGAP1. Plays a key role in synaptic plasticity and memory by regulating the Ras and Rap protein signaling: required for overactivity-dependent spine remodeling by phosphorylating the Ras activator RASGRF1 and the Rap inhibitor SIPA1L1 leading to their degradation by the proteasome. Conversely, phosphorylates the Rap activator RAPGEF2 and the Ras inhibitor SYNGAP1, promoting their activity. Also regulates synaptic plasticity independently of kinase activity, via its interaction with NSF that disrupts the interaction between NSF and the GRIA2 subunit of AMPARs, leading to a rapid rundown of AMPAR-mediated current that occludes long term depression. Required for procentriole formation and centriole duplication by phosphorylating CPAP and NPM1, respectively. Its induction by p53/TP53 suggests that it may participate in the mitotic checkpoint following stress (By similarity).</text>
</comment>
<comment type="catalytic activity">
    <reaction>
        <text>L-seryl-[protein] + ATP = O-phospho-L-seryl-[protein] + ADP + H(+)</text>
        <dbReference type="Rhea" id="RHEA:17989"/>
        <dbReference type="Rhea" id="RHEA-COMP:9863"/>
        <dbReference type="Rhea" id="RHEA-COMP:11604"/>
        <dbReference type="ChEBI" id="CHEBI:15378"/>
        <dbReference type="ChEBI" id="CHEBI:29999"/>
        <dbReference type="ChEBI" id="CHEBI:30616"/>
        <dbReference type="ChEBI" id="CHEBI:83421"/>
        <dbReference type="ChEBI" id="CHEBI:456216"/>
        <dbReference type="EC" id="2.7.11.21"/>
    </reaction>
</comment>
<comment type="catalytic activity">
    <reaction>
        <text>L-threonyl-[protein] + ATP = O-phospho-L-threonyl-[protein] + ADP + H(+)</text>
        <dbReference type="Rhea" id="RHEA:46608"/>
        <dbReference type="Rhea" id="RHEA-COMP:11060"/>
        <dbReference type="Rhea" id="RHEA-COMP:11605"/>
        <dbReference type="ChEBI" id="CHEBI:15378"/>
        <dbReference type="ChEBI" id="CHEBI:30013"/>
        <dbReference type="ChEBI" id="CHEBI:30616"/>
        <dbReference type="ChEBI" id="CHEBI:61977"/>
        <dbReference type="ChEBI" id="CHEBI:456216"/>
        <dbReference type="EC" id="2.7.11.21"/>
    </reaction>
</comment>
<comment type="activity regulation">
    <text evidence="1">Activated by phosphorylation of Thr-239. Once activated, activity is stimulated by binding target proteins (By similarity).</text>
</comment>
<comment type="subunit">
    <text evidence="1">Interacts with NSF; causing NSF dissociation from GRIA2. Interacts with CIB1 (By similarity).</text>
</comment>
<comment type="subcellular location">
    <subcellularLocation>
        <location evidence="1">Cytoplasm</location>
        <location evidence="1">Cytoskeleton</location>
        <location evidence="1">Microtubule organizing center</location>
        <location evidence="1">Centrosome</location>
        <location evidence="1">Centriole</location>
    </subcellularLocation>
    <subcellularLocation>
        <location evidence="1">Cell projection</location>
        <location evidence="1">Dendrite</location>
    </subcellularLocation>
    <text evidence="1">Localizes to centrosomes during early G1 phase where it only associates to the mother centriole and then distributes equally to both mother and daughter centrioles at the onset of S phase.</text>
</comment>
<comment type="domain">
    <text evidence="1">The POLO box domains act as phosphopeptide-binding module that recognizes and binds serine-[phosphothreonine/phosphoserine]-(proline/X) motifs. PLK2 recognizes and binds docking proteins that are already phosphorylated on these motifs, and then phosphorylates them (By similarity).</text>
</comment>
<comment type="PTM">
    <text evidence="1">Catalytic activity is enhanced by phosphorylation of Thr-239.</text>
</comment>
<comment type="similarity">
    <text evidence="4">Belongs to the protein kinase superfamily. Ser/Thr protein kinase family. CDC5/Polo subfamily.</text>
</comment>
<protein>
    <recommendedName>
        <fullName>Serine/threonine-protein kinase PLK2</fullName>
        <ecNumber>2.7.11.21</ecNumber>
    </recommendedName>
    <alternativeName>
        <fullName>Polo-like kinase 2</fullName>
        <shortName>PLK-2</shortName>
    </alternativeName>
</protein>
<proteinExistence type="inferred from homology"/>
<accession>Q5R4L1</accession>